<evidence type="ECO:0000250" key="1"/>
<evidence type="ECO:0000255" key="2"/>
<evidence type="ECO:0000305" key="3"/>
<sequence>MKKLLCAASFGIALAFSAGAQAADKIAVVNVGEIFQQLPAREAVAKQLENEFKNRASELQRMETDLQSKIQKLQRDGSTMKSSERTNLEKEVMAKREEFGKKAQAFEQDHRRREMEERNKILSRIQDAIKVVAGKEGYDIVIDANAVAYSVSGKNITASVLKQVK</sequence>
<name>SKP_PHOLU</name>
<dbReference type="EMBL" id="AJ236920">
    <property type="protein sequence ID" value="CAB51930.1"/>
    <property type="molecule type" value="Genomic_DNA"/>
</dbReference>
<dbReference type="RefSeq" id="WP_049583806.1">
    <property type="nucleotide sequence ID" value="NZ_MYFJ01000042.1"/>
</dbReference>
<dbReference type="SMR" id="Q9S340"/>
<dbReference type="STRING" id="29488.KS18_15800"/>
<dbReference type="GeneID" id="45656649"/>
<dbReference type="OrthoDB" id="7061584at2"/>
<dbReference type="GO" id="GO:0005829">
    <property type="term" value="C:cytosol"/>
    <property type="evidence" value="ECO:0007669"/>
    <property type="project" value="TreeGrafter"/>
</dbReference>
<dbReference type="GO" id="GO:0042597">
    <property type="term" value="C:periplasmic space"/>
    <property type="evidence" value="ECO:0007669"/>
    <property type="project" value="UniProtKB-SubCell"/>
</dbReference>
<dbReference type="GO" id="GO:0051082">
    <property type="term" value="F:unfolded protein binding"/>
    <property type="evidence" value="ECO:0007669"/>
    <property type="project" value="InterPro"/>
</dbReference>
<dbReference type="GO" id="GO:0061077">
    <property type="term" value="P:chaperone-mediated protein folding"/>
    <property type="evidence" value="ECO:0007669"/>
    <property type="project" value="TreeGrafter"/>
</dbReference>
<dbReference type="GO" id="GO:0050821">
    <property type="term" value="P:protein stabilization"/>
    <property type="evidence" value="ECO:0007669"/>
    <property type="project" value="TreeGrafter"/>
</dbReference>
<dbReference type="Gene3D" id="3.30.910.20">
    <property type="entry name" value="Skp domain"/>
    <property type="match status" value="1"/>
</dbReference>
<dbReference type="InterPro" id="IPR005632">
    <property type="entry name" value="Chaperone_Skp"/>
</dbReference>
<dbReference type="InterPro" id="IPR024930">
    <property type="entry name" value="Skp_dom_sf"/>
</dbReference>
<dbReference type="NCBIfam" id="NF008047">
    <property type="entry name" value="PRK10780.1"/>
    <property type="match status" value="1"/>
</dbReference>
<dbReference type="PANTHER" id="PTHR35089">
    <property type="entry name" value="CHAPERONE PROTEIN SKP"/>
    <property type="match status" value="1"/>
</dbReference>
<dbReference type="PANTHER" id="PTHR35089:SF1">
    <property type="entry name" value="CHAPERONE PROTEIN SKP"/>
    <property type="match status" value="1"/>
</dbReference>
<dbReference type="Pfam" id="PF03938">
    <property type="entry name" value="OmpH"/>
    <property type="match status" value="1"/>
</dbReference>
<dbReference type="PIRSF" id="PIRSF002094">
    <property type="entry name" value="OMP26_Skp"/>
    <property type="match status" value="1"/>
</dbReference>
<dbReference type="SMART" id="SM00935">
    <property type="entry name" value="OmpH"/>
    <property type="match status" value="1"/>
</dbReference>
<dbReference type="SUPFAM" id="SSF111384">
    <property type="entry name" value="OmpH-like"/>
    <property type="match status" value="1"/>
</dbReference>
<feature type="signal peptide" evidence="2">
    <location>
        <begin position="1"/>
        <end position="22"/>
    </location>
</feature>
<feature type="chain" id="PRO_0000227890" description="Chaperone protein Skp">
    <location>
        <begin position="23"/>
        <end position="165"/>
    </location>
</feature>
<feature type="region of interest" description="Lipopolysaccharide binding" evidence="2">
    <location>
        <begin position="102"/>
        <end position="113"/>
    </location>
</feature>
<comment type="function">
    <text evidence="1">Molecular chaperone that interacts specifically with outer membrane proteins, thus maintaining the solubility of early folding intermediates during passage through the periplasm.</text>
</comment>
<comment type="subunit">
    <text evidence="1">Homotrimer.</text>
</comment>
<comment type="subcellular location">
    <subcellularLocation>
        <location evidence="1">Periplasm</location>
    </subcellularLocation>
</comment>
<comment type="similarity">
    <text evidence="3">Belongs to the Skp family.</text>
</comment>
<accession>Q9S340</accession>
<keyword id="KW-0143">Chaperone</keyword>
<keyword id="KW-0574">Periplasm</keyword>
<keyword id="KW-0732">Signal</keyword>
<protein>
    <recommendedName>
        <fullName>Chaperone protein Skp</fullName>
    </recommendedName>
</protein>
<organism>
    <name type="scientific">Photorhabdus luminescens</name>
    <name type="common">Xenorhabdus luminescens</name>
    <dbReference type="NCBI Taxonomy" id="29488"/>
    <lineage>
        <taxon>Bacteria</taxon>
        <taxon>Pseudomonadati</taxon>
        <taxon>Pseudomonadota</taxon>
        <taxon>Gammaproteobacteria</taxon>
        <taxon>Enterobacterales</taxon>
        <taxon>Morganellaceae</taxon>
        <taxon>Photorhabdus</taxon>
    </lineage>
</organism>
<reference key="1">
    <citation type="submission" date="1999-02" db="EMBL/GenBank/DDBJ databases">
        <title>Photorhabdus luminescens genomic region homologous to 4.0 minute Escherichia coli region promotes pleiotropic phenotypes.</title>
        <authorList>
            <person name="Chatonnet-Marton P.I."/>
            <person name="Givaudan A."/>
            <person name="Lanois A."/>
            <person name="Boemare N.E."/>
        </authorList>
    </citation>
    <scope>NUCLEOTIDE SEQUENCE [GENOMIC DNA]</scope>
    <source>
        <strain>Hm</strain>
    </source>
</reference>
<gene>
    <name type="primary">skp</name>
    <name type="synonym">ompH</name>
</gene>
<proteinExistence type="inferred from homology"/>